<sequence length="212" mass="22573">MAIGLVGRKVGMTRIFTEDGTSIPVTVIEATPNRVTQLRTEESDGYRALQVTAGTKKANRINKAEAGHFAKAGVEAGRTLVEFRLEENEGADIEVGSEITVEIFNDTKKIDVTGTSKGKGFQGAIKRWNFSSQRMTHGNSLSHRAPGSIGQNQSPGKVFKGKKMAGQLGNKQVTTQSLEVVRVDVENGLILVKGAVPGATGNDVIVKPAVKA</sequence>
<feature type="chain" id="PRO_1000141818" description="Large ribosomal subunit protein uL3">
    <location>
        <begin position="1"/>
        <end position="212"/>
    </location>
</feature>
<feature type="region of interest" description="Disordered" evidence="2">
    <location>
        <begin position="135"/>
        <end position="161"/>
    </location>
</feature>
<feature type="modified residue" description="N5-methylglutamine" evidence="1">
    <location>
        <position position="153"/>
    </location>
</feature>
<accession>B4RZN2</accession>
<accession>F2G5N4</accession>
<reference key="1">
    <citation type="journal article" date="2008" name="ISME J.">
        <title>Comparative genomics of two ecotypes of the marine planktonic copiotroph Alteromonas macleodii suggests alternative lifestyles associated with different kinds of particulate organic matter.</title>
        <authorList>
            <person name="Ivars-Martinez E."/>
            <person name="Martin-Cuadrado A.-B."/>
            <person name="D'Auria G."/>
            <person name="Mira A."/>
            <person name="Ferriera S."/>
            <person name="Johnson J."/>
            <person name="Friedman R."/>
            <person name="Rodriguez-Valera F."/>
        </authorList>
    </citation>
    <scope>NUCLEOTIDE SEQUENCE [LARGE SCALE GENOMIC DNA]</scope>
    <source>
        <strain>DSM 17117 / CIP 110805 / LMG 28347 / Deep ecotype</strain>
    </source>
</reference>
<dbReference type="EMBL" id="CP001103">
    <property type="protein sequence ID" value="AEA96601.1"/>
    <property type="molecule type" value="Genomic_DNA"/>
</dbReference>
<dbReference type="RefSeq" id="WP_012516957.1">
    <property type="nucleotide sequence ID" value="NC_011138.3"/>
</dbReference>
<dbReference type="SMR" id="B4RZN2"/>
<dbReference type="KEGG" id="amc:MADE_1002260"/>
<dbReference type="HOGENOM" id="CLU_044142_4_1_6"/>
<dbReference type="Proteomes" id="UP000001870">
    <property type="component" value="Chromosome"/>
</dbReference>
<dbReference type="GO" id="GO:0022625">
    <property type="term" value="C:cytosolic large ribosomal subunit"/>
    <property type="evidence" value="ECO:0007669"/>
    <property type="project" value="TreeGrafter"/>
</dbReference>
<dbReference type="GO" id="GO:0019843">
    <property type="term" value="F:rRNA binding"/>
    <property type="evidence" value="ECO:0007669"/>
    <property type="project" value="UniProtKB-UniRule"/>
</dbReference>
<dbReference type="GO" id="GO:0003735">
    <property type="term" value="F:structural constituent of ribosome"/>
    <property type="evidence" value="ECO:0007669"/>
    <property type="project" value="InterPro"/>
</dbReference>
<dbReference type="GO" id="GO:0006412">
    <property type="term" value="P:translation"/>
    <property type="evidence" value="ECO:0007669"/>
    <property type="project" value="UniProtKB-UniRule"/>
</dbReference>
<dbReference type="FunFam" id="2.40.30.10:FF:000004">
    <property type="entry name" value="50S ribosomal protein L3"/>
    <property type="match status" value="1"/>
</dbReference>
<dbReference type="FunFam" id="3.30.160.810:FF:000001">
    <property type="entry name" value="50S ribosomal protein L3"/>
    <property type="match status" value="1"/>
</dbReference>
<dbReference type="Gene3D" id="3.30.160.810">
    <property type="match status" value="1"/>
</dbReference>
<dbReference type="Gene3D" id="2.40.30.10">
    <property type="entry name" value="Translation factors"/>
    <property type="match status" value="1"/>
</dbReference>
<dbReference type="HAMAP" id="MF_01325_B">
    <property type="entry name" value="Ribosomal_uL3_B"/>
    <property type="match status" value="1"/>
</dbReference>
<dbReference type="InterPro" id="IPR000597">
    <property type="entry name" value="Ribosomal_uL3"/>
</dbReference>
<dbReference type="InterPro" id="IPR019927">
    <property type="entry name" value="Ribosomal_uL3_bac/org-type"/>
</dbReference>
<dbReference type="InterPro" id="IPR019926">
    <property type="entry name" value="Ribosomal_uL3_CS"/>
</dbReference>
<dbReference type="InterPro" id="IPR009000">
    <property type="entry name" value="Transl_B-barrel_sf"/>
</dbReference>
<dbReference type="NCBIfam" id="TIGR03625">
    <property type="entry name" value="L3_bact"/>
    <property type="match status" value="1"/>
</dbReference>
<dbReference type="PANTHER" id="PTHR11229">
    <property type="entry name" value="50S RIBOSOMAL PROTEIN L3"/>
    <property type="match status" value="1"/>
</dbReference>
<dbReference type="PANTHER" id="PTHR11229:SF16">
    <property type="entry name" value="LARGE RIBOSOMAL SUBUNIT PROTEIN UL3C"/>
    <property type="match status" value="1"/>
</dbReference>
<dbReference type="Pfam" id="PF00297">
    <property type="entry name" value="Ribosomal_L3"/>
    <property type="match status" value="1"/>
</dbReference>
<dbReference type="SUPFAM" id="SSF50447">
    <property type="entry name" value="Translation proteins"/>
    <property type="match status" value="1"/>
</dbReference>
<dbReference type="PROSITE" id="PS00474">
    <property type="entry name" value="RIBOSOMAL_L3"/>
    <property type="match status" value="1"/>
</dbReference>
<protein>
    <recommendedName>
        <fullName evidence="1">Large ribosomal subunit protein uL3</fullName>
    </recommendedName>
    <alternativeName>
        <fullName evidence="3">50S ribosomal protein L3</fullName>
    </alternativeName>
</protein>
<evidence type="ECO:0000255" key="1">
    <source>
        <dbReference type="HAMAP-Rule" id="MF_01325"/>
    </source>
</evidence>
<evidence type="ECO:0000256" key="2">
    <source>
        <dbReference type="SAM" id="MobiDB-lite"/>
    </source>
</evidence>
<evidence type="ECO:0000305" key="3"/>
<comment type="function">
    <text evidence="1">One of the primary rRNA binding proteins, it binds directly near the 3'-end of the 23S rRNA, where it nucleates assembly of the 50S subunit.</text>
</comment>
<comment type="subunit">
    <text evidence="1">Part of the 50S ribosomal subunit. Forms a cluster with proteins L14 and L19.</text>
</comment>
<comment type="PTM">
    <text evidence="1">Methylated by PrmB.</text>
</comment>
<comment type="similarity">
    <text evidence="1">Belongs to the universal ribosomal protein uL3 family.</text>
</comment>
<keyword id="KW-0488">Methylation</keyword>
<keyword id="KW-0687">Ribonucleoprotein</keyword>
<keyword id="KW-0689">Ribosomal protein</keyword>
<keyword id="KW-0694">RNA-binding</keyword>
<keyword id="KW-0699">rRNA-binding</keyword>
<organism>
    <name type="scientific">Alteromonas mediterranea (strain DSM 17117 / CIP 110805 / LMG 28347 / Deep ecotype)</name>
    <dbReference type="NCBI Taxonomy" id="1774373"/>
    <lineage>
        <taxon>Bacteria</taxon>
        <taxon>Pseudomonadati</taxon>
        <taxon>Pseudomonadota</taxon>
        <taxon>Gammaproteobacteria</taxon>
        <taxon>Alteromonadales</taxon>
        <taxon>Alteromonadaceae</taxon>
        <taxon>Alteromonas/Salinimonas group</taxon>
        <taxon>Alteromonas</taxon>
    </lineage>
</organism>
<proteinExistence type="inferred from homology"/>
<gene>
    <name evidence="1" type="primary">rplC</name>
    <name type="ordered locus">MADE_1002260</name>
</gene>
<name>RL3_ALTMD</name>